<proteinExistence type="inferred from homology"/>
<keyword id="KW-0067">ATP-binding</keyword>
<keyword id="KW-0997">Cell inner membrane</keyword>
<keyword id="KW-1003">Cell membrane</keyword>
<keyword id="KW-0418">Kinase</keyword>
<keyword id="KW-0472">Membrane</keyword>
<keyword id="KW-0547">Nucleotide-binding</keyword>
<keyword id="KW-0597">Phosphoprotein</keyword>
<keyword id="KW-0808">Transferase</keyword>
<keyword id="KW-0812">Transmembrane</keyword>
<keyword id="KW-1133">Transmembrane helix</keyword>
<keyword id="KW-0902">Two-component regulatory system</keyword>
<evidence type="ECO:0000255" key="1"/>
<evidence type="ECO:0000255" key="2">
    <source>
        <dbReference type="PROSITE-ProRule" id="PRU00107"/>
    </source>
</evidence>
<evidence type="ECO:0000255" key="3">
    <source>
        <dbReference type="PROSITE-ProRule" id="PRU00140"/>
    </source>
</evidence>
<evidence type="ECO:0000255" key="4">
    <source>
        <dbReference type="PROSITE-ProRule" id="PRU00141"/>
    </source>
</evidence>
<gene>
    <name type="primary">dctS</name>
</gene>
<sequence>MRDTTGGPAGAEVWTVPGLLGARKLDLLALIPLVAIVALMTLVGALLFAVAQSDANRARAKLATDALWVEQTLRFQMAVDEDVLVRLALDASAGASQQALSARARLHLAANPETLGLRWYDATGRLIAAVPEGPGPAEAALVRQLLASGALPPRPVYGPVRDGRVVLAERVSASGGVVVATVSLPMMLERHLPWWIAEQYGVRISDTSGVLAERARRPIAAAAPRHGISFDPPLAGTTLEIMAYDAPDAFGNAALLAAIGALSVFAVLAMVVLHRNALRRRMAEDRLRAEMAFRRAMEESLTVGMRAKDLSGRILYVNGAFCKLVGLAAEDLVGRAQPMPYWAPDFLEETLARQRQLIEGQPVPQAFETRFRRSDGSEIEVQVFEAPLIDAGGRHRGWMGSVIDITQAKQAARLARAQDESLARTGRLVTLGEMASTLAHELNQPLAAIASYAAGGLNLFDQPEPNLTMLRQAFEKMGAQARRAGLVIRRVQDFVKKRTPQLAALDLSEVLAEALSITAPVAREHRVKLASLIEGRIPGVQADRILIEQVLVNLIRNGVEAMAEGPRTGDDLTVRLARAGAAVTIEVMDRGPGISDAVAASLFDPFTSTKSEGMGMGLNICRSIVEMHHGSLSHGPRAGGGTVFTVTLPVPQEGAPA</sequence>
<feature type="chain" id="PRO_0000074749" description="C4-dicarboxylate transport sensor protein DctS">
    <location>
        <begin position="1"/>
        <end position="657"/>
    </location>
</feature>
<feature type="topological domain" description="Cytoplasmic" evidence="1">
    <location>
        <begin position="1"/>
        <end position="26"/>
    </location>
</feature>
<feature type="transmembrane region" description="Helical" evidence="1">
    <location>
        <begin position="27"/>
        <end position="51"/>
    </location>
</feature>
<feature type="topological domain" description="Periplasmic" evidence="1">
    <location>
        <begin position="52"/>
        <end position="252"/>
    </location>
</feature>
<feature type="transmembrane region" description="Helical" evidence="1">
    <location>
        <begin position="253"/>
        <end position="273"/>
    </location>
</feature>
<feature type="topological domain" description="Cytoplasmic" evidence="1">
    <location>
        <begin position="274"/>
        <end position="657"/>
    </location>
</feature>
<feature type="domain" description="PAS" evidence="3">
    <location>
        <begin position="289"/>
        <end position="361"/>
    </location>
</feature>
<feature type="domain" description="PAC" evidence="4">
    <location>
        <begin position="365"/>
        <end position="417"/>
    </location>
</feature>
<feature type="domain" description="Histidine kinase" evidence="2">
    <location>
        <begin position="437"/>
        <end position="652"/>
    </location>
</feature>
<feature type="region of interest" description="Inter-domain linker" evidence="1">
    <location>
        <begin position="407"/>
        <end position="422"/>
    </location>
</feature>
<feature type="modified residue" description="Phosphohistidine; by autocatalysis" evidence="2">
    <location>
        <position position="440"/>
    </location>
</feature>
<accession>P37739</accession>
<reference key="1">
    <citation type="journal article" date="1993" name="Mol. Gen. Genet.">
        <title>Sequence analysis and interposon mutagenesis of a sensor-kinase (DctS) and response-regulator (DctR) controlling synthesis of the high-affinity C4-dicarboxylate transport system in Rhodobacter capsulatus.</title>
        <authorList>
            <person name="Hamblin M.J."/>
            <person name="Shaw J.G."/>
            <person name="Kelly D.J."/>
        </authorList>
    </citation>
    <scope>NUCLEOTIDE SEQUENCE [GENOMIC DNA]</scope>
    <source>
        <strain>ATCC 33303 / B10</strain>
    </source>
</reference>
<protein>
    <recommendedName>
        <fullName>C4-dicarboxylate transport sensor protein DctS</fullName>
        <ecNumber>2.7.13.3</ecNumber>
    </recommendedName>
</protein>
<dbReference type="EC" id="2.7.13.3"/>
<dbReference type="EMBL" id="X64733">
    <property type="protein sequence ID" value="CAA45999.1"/>
    <property type="molecule type" value="Genomic_DNA"/>
</dbReference>
<dbReference type="PIR" id="S30288">
    <property type="entry name" value="S30288"/>
</dbReference>
<dbReference type="RefSeq" id="WP_031321560.1">
    <property type="nucleotide sequence ID" value="NZ_JAOTPJ010000066.1"/>
</dbReference>
<dbReference type="SMR" id="P37739"/>
<dbReference type="BRENDA" id="2.7.13.3">
    <property type="organism ID" value="5381"/>
</dbReference>
<dbReference type="GO" id="GO:0005886">
    <property type="term" value="C:plasma membrane"/>
    <property type="evidence" value="ECO:0007669"/>
    <property type="project" value="UniProtKB-SubCell"/>
</dbReference>
<dbReference type="GO" id="GO:0005524">
    <property type="term" value="F:ATP binding"/>
    <property type="evidence" value="ECO:0007669"/>
    <property type="project" value="UniProtKB-KW"/>
</dbReference>
<dbReference type="GO" id="GO:0000155">
    <property type="term" value="F:phosphorelay sensor kinase activity"/>
    <property type="evidence" value="ECO:0007669"/>
    <property type="project" value="InterPro"/>
</dbReference>
<dbReference type="GO" id="GO:0006355">
    <property type="term" value="P:regulation of DNA-templated transcription"/>
    <property type="evidence" value="ECO:0007669"/>
    <property type="project" value="InterPro"/>
</dbReference>
<dbReference type="CDD" id="cd00082">
    <property type="entry name" value="HisKA"/>
    <property type="match status" value="1"/>
</dbReference>
<dbReference type="CDD" id="cd00130">
    <property type="entry name" value="PAS"/>
    <property type="match status" value="1"/>
</dbReference>
<dbReference type="Gene3D" id="1.10.287.130">
    <property type="match status" value="1"/>
</dbReference>
<dbReference type="Gene3D" id="3.30.565.10">
    <property type="entry name" value="Histidine kinase-like ATPase, C-terminal domain"/>
    <property type="match status" value="1"/>
</dbReference>
<dbReference type="Gene3D" id="3.30.450.20">
    <property type="entry name" value="PAS domain"/>
    <property type="match status" value="1"/>
</dbReference>
<dbReference type="InterPro" id="IPR036890">
    <property type="entry name" value="HATPase_C_sf"/>
</dbReference>
<dbReference type="InterPro" id="IPR005467">
    <property type="entry name" value="His_kinase_dom"/>
</dbReference>
<dbReference type="InterPro" id="IPR003661">
    <property type="entry name" value="HisK_dim/P_dom"/>
</dbReference>
<dbReference type="InterPro" id="IPR036097">
    <property type="entry name" value="HisK_dim/P_sf"/>
</dbReference>
<dbReference type="InterPro" id="IPR001610">
    <property type="entry name" value="PAC"/>
</dbReference>
<dbReference type="InterPro" id="IPR000014">
    <property type="entry name" value="PAS"/>
</dbReference>
<dbReference type="InterPro" id="IPR000700">
    <property type="entry name" value="PAS-assoc_C"/>
</dbReference>
<dbReference type="InterPro" id="IPR035965">
    <property type="entry name" value="PAS-like_dom_sf"/>
</dbReference>
<dbReference type="InterPro" id="IPR013767">
    <property type="entry name" value="PAS_fold"/>
</dbReference>
<dbReference type="InterPro" id="IPR004358">
    <property type="entry name" value="Sig_transdc_His_kin-like_C"/>
</dbReference>
<dbReference type="NCBIfam" id="TIGR00229">
    <property type="entry name" value="sensory_box"/>
    <property type="match status" value="1"/>
</dbReference>
<dbReference type="PANTHER" id="PTHR43065:SF10">
    <property type="entry name" value="PEROXIDE STRESS-ACTIVATED HISTIDINE KINASE MAK3"/>
    <property type="match status" value="1"/>
</dbReference>
<dbReference type="PANTHER" id="PTHR43065">
    <property type="entry name" value="SENSOR HISTIDINE KINASE"/>
    <property type="match status" value="1"/>
</dbReference>
<dbReference type="Pfam" id="PF02518">
    <property type="entry name" value="HATPase_c"/>
    <property type="match status" value="1"/>
</dbReference>
<dbReference type="Pfam" id="PF00512">
    <property type="entry name" value="HisKA"/>
    <property type="match status" value="1"/>
</dbReference>
<dbReference type="Pfam" id="PF00989">
    <property type="entry name" value="PAS"/>
    <property type="match status" value="1"/>
</dbReference>
<dbReference type="PRINTS" id="PR00344">
    <property type="entry name" value="BCTRLSENSOR"/>
</dbReference>
<dbReference type="SMART" id="SM00387">
    <property type="entry name" value="HATPase_c"/>
    <property type="match status" value="1"/>
</dbReference>
<dbReference type="SMART" id="SM00388">
    <property type="entry name" value="HisKA"/>
    <property type="match status" value="1"/>
</dbReference>
<dbReference type="SMART" id="SM00086">
    <property type="entry name" value="PAC"/>
    <property type="match status" value="1"/>
</dbReference>
<dbReference type="SMART" id="SM00091">
    <property type="entry name" value="PAS"/>
    <property type="match status" value="1"/>
</dbReference>
<dbReference type="SUPFAM" id="SSF55874">
    <property type="entry name" value="ATPase domain of HSP90 chaperone/DNA topoisomerase II/histidine kinase"/>
    <property type="match status" value="1"/>
</dbReference>
<dbReference type="SUPFAM" id="SSF47384">
    <property type="entry name" value="Homodimeric domain of signal transducing histidine kinase"/>
    <property type="match status" value="1"/>
</dbReference>
<dbReference type="SUPFAM" id="SSF55785">
    <property type="entry name" value="PYP-like sensor domain (PAS domain)"/>
    <property type="match status" value="1"/>
</dbReference>
<dbReference type="PROSITE" id="PS50109">
    <property type="entry name" value="HIS_KIN"/>
    <property type="match status" value="1"/>
</dbReference>
<dbReference type="PROSITE" id="PS50113">
    <property type="entry name" value="PAC"/>
    <property type="match status" value="1"/>
</dbReference>
<dbReference type="PROSITE" id="PS50112">
    <property type="entry name" value="PAS"/>
    <property type="match status" value="1"/>
</dbReference>
<name>DCTS_RHOCA</name>
<organism>
    <name type="scientific">Rhodobacter capsulatus</name>
    <name type="common">Rhodopseudomonas capsulata</name>
    <dbReference type="NCBI Taxonomy" id="1061"/>
    <lineage>
        <taxon>Bacteria</taxon>
        <taxon>Pseudomonadati</taxon>
        <taxon>Pseudomonadota</taxon>
        <taxon>Alphaproteobacteria</taxon>
        <taxon>Rhodobacterales</taxon>
        <taxon>Rhodobacter group</taxon>
        <taxon>Rhodobacter</taxon>
    </lineage>
</organism>
<comment type="function">
    <text>Member of the two-component regulatory system DctS/DctR involved in the transport of C4-dicarboxylates. DctS functions as a membrane-associated protein kinase that phosphorylates DctR in response to environmental signals.</text>
</comment>
<comment type="catalytic activity">
    <reaction>
        <text>ATP + protein L-histidine = ADP + protein N-phospho-L-histidine.</text>
        <dbReference type="EC" id="2.7.13.3"/>
    </reaction>
</comment>
<comment type="subcellular location">
    <subcellularLocation>
        <location>Cell inner membrane</location>
        <topology>Multi-pass membrane protein</topology>
    </subcellularLocation>
</comment>